<keyword id="KW-0004">4Fe-4S</keyword>
<keyword id="KW-0077">Bacteriochlorophyll biosynthesis</keyword>
<keyword id="KW-0149">Chlorophyll biosynthesis</keyword>
<keyword id="KW-0408">Iron</keyword>
<keyword id="KW-0411">Iron-sulfur</keyword>
<keyword id="KW-0479">Metal-binding</keyword>
<keyword id="KW-0560">Oxidoreductase</keyword>
<keyword id="KW-0602">Photosynthesis</keyword>
<keyword id="KW-0949">S-adenosyl-L-methionine</keyword>
<name>BCID_CHLLM</name>
<feature type="chain" id="PRO_0000443059" description="Bacteriochlorophyllide c C-7(1)-hydroxylase">
    <location>
        <begin position="1"/>
        <end position="402"/>
    </location>
</feature>
<feature type="domain" description="Radical SAM core" evidence="1">
    <location>
        <begin position="104"/>
        <end position="359"/>
    </location>
</feature>
<feature type="binding site" evidence="1">
    <location>
        <position position="120"/>
    </location>
    <ligand>
        <name>[4Fe-4S] cluster</name>
        <dbReference type="ChEBI" id="CHEBI:49883"/>
        <note>4Fe-4S-S-AdoMet</note>
    </ligand>
</feature>
<feature type="binding site" evidence="1">
    <location>
        <position position="129"/>
    </location>
    <ligand>
        <name>[4Fe-4S] cluster</name>
        <dbReference type="ChEBI" id="CHEBI:49883"/>
        <note>4Fe-4S-S-AdoMet</note>
    </ligand>
</feature>
<feature type="binding site" evidence="1">
    <location>
        <position position="132"/>
    </location>
    <ligand>
        <name>[4Fe-4S] cluster</name>
        <dbReference type="ChEBI" id="CHEBI:49883"/>
        <note>4Fe-4S-S-AdoMet</note>
    </ligand>
</feature>
<evidence type="ECO:0000255" key="1">
    <source>
        <dbReference type="PROSITE-ProRule" id="PRU01266"/>
    </source>
</evidence>
<evidence type="ECO:0000269" key="2">
    <source>
    </source>
</evidence>
<evidence type="ECO:0000269" key="3">
    <source>
    </source>
</evidence>
<evidence type="ECO:0000269" key="4">
    <source>
    </source>
</evidence>
<evidence type="ECO:0000303" key="5">
    <source>
    </source>
</evidence>
<evidence type="ECO:0000303" key="6">
    <source>
    </source>
</evidence>
<evidence type="ECO:0000305" key="7"/>
<evidence type="ECO:0000305" key="8">
    <source>
    </source>
</evidence>
<evidence type="ECO:0000312" key="9">
    <source>
        <dbReference type="EMBL" id="AOS84617.1"/>
    </source>
</evidence>
<evidence type="ECO:0000312" key="10">
    <source>
        <dbReference type="EMBL" id="BAN14903.1"/>
    </source>
</evidence>
<evidence type="ECO:0000312" key="11">
    <source>
        <dbReference type="Proteomes" id="UP000095185"/>
    </source>
</evidence>
<protein>
    <recommendedName>
        <fullName>Bacteriochlorophyllide c C-7(1)-hydroxylase</fullName>
        <ecNumber evidence="4">1.17.98.2</ecNumber>
    </recommendedName>
    <alternativeName>
        <fullName evidence="6">Radical S-adenosyl-L-methionine (SAM) enzyme BciD</fullName>
    </alternativeName>
</protein>
<dbReference type="EC" id="1.17.98.2" evidence="4"/>
<dbReference type="EMBL" id="CP017305">
    <property type="protein sequence ID" value="AOS84617.1"/>
    <property type="molecule type" value="Genomic_DNA"/>
</dbReference>
<dbReference type="EMBL" id="AB762294">
    <property type="protein sequence ID" value="BAN14903.1"/>
    <property type="molecule type" value="Genomic_DNA"/>
</dbReference>
<dbReference type="RefSeq" id="WP_069810809.1">
    <property type="nucleotide sequence ID" value="NZ_CP017305.1"/>
</dbReference>
<dbReference type="SMR" id="N0DKX5"/>
<dbReference type="STRING" id="274537.BIU88_11010"/>
<dbReference type="KEGG" id="clz:BIU88_11010"/>
<dbReference type="OrthoDB" id="5391057at2"/>
<dbReference type="BioCyc" id="MetaCyc:MONOMER-19714"/>
<dbReference type="BRENDA" id="1.17.98.2">
    <property type="organism ID" value="10376"/>
</dbReference>
<dbReference type="UniPathway" id="UPA00669"/>
<dbReference type="Proteomes" id="UP000095185">
    <property type="component" value="Chromosome"/>
</dbReference>
<dbReference type="GO" id="GO:0051539">
    <property type="term" value="F:4 iron, 4 sulfur cluster binding"/>
    <property type="evidence" value="ECO:0007669"/>
    <property type="project" value="UniProtKB-KW"/>
</dbReference>
<dbReference type="GO" id="GO:0046872">
    <property type="term" value="F:metal ion binding"/>
    <property type="evidence" value="ECO:0007669"/>
    <property type="project" value="UniProtKB-KW"/>
</dbReference>
<dbReference type="GO" id="GO:0016491">
    <property type="term" value="F:oxidoreductase activity"/>
    <property type="evidence" value="ECO:0007669"/>
    <property type="project" value="UniProtKB-KW"/>
</dbReference>
<dbReference type="GO" id="GO:0030494">
    <property type="term" value="P:bacteriochlorophyll biosynthetic process"/>
    <property type="evidence" value="ECO:0007669"/>
    <property type="project" value="UniProtKB-UniPathway"/>
</dbReference>
<dbReference type="GO" id="GO:0015979">
    <property type="term" value="P:photosynthesis"/>
    <property type="evidence" value="ECO:0007669"/>
    <property type="project" value="UniProtKB-KW"/>
</dbReference>
<dbReference type="Gene3D" id="3.20.20.70">
    <property type="entry name" value="Aldolase class I"/>
    <property type="match status" value="1"/>
</dbReference>
<dbReference type="InterPro" id="IPR013785">
    <property type="entry name" value="Aldolase_TIM"/>
</dbReference>
<dbReference type="InterPro" id="IPR006638">
    <property type="entry name" value="Elp3/MiaA/NifB-like_rSAM"/>
</dbReference>
<dbReference type="InterPro" id="IPR007197">
    <property type="entry name" value="rSAM"/>
</dbReference>
<dbReference type="NCBIfam" id="NF045502">
    <property type="entry name" value="variant_rSAM"/>
    <property type="match status" value="1"/>
</dbReference>
<dbReference type="SMART" id="SM00729">
    <property type="entry name" value="Elp3"/>
    <property type="match status" value="1"/>
</dbReference>
<dbReference type="SUPFAM" id="SSF102114">
    <property type="entry name" value="Radical SAM enzymes"/>
    <property type="match status" value="1"/>
</dbReference>
<dbReference type="PROSITE" id="PS51918">
    <property type="entry name" value="RADICAL_SAM"/>
    <property type="match status" value="1"/>
</dbReference>
<accession>N0DKX5</accession>
<proteinExistence type="evidence at protein level"/>
<sequence>MSTKRVITKEDIHLKARLLSEGAKVTVNKPPASGFNPFRAMVLNGSDLATLVRQEPYTRLEVQVNGDDVEFYDCGQHLASGRMQEAFSWRSGKLSNGRPVDAAVIGMNQDIINIHYSYSCDNNNTGRSCRFCFFFADQHIGVGKELAKMPFSKIEELAKEQAEAVKIATDAGWRGTLVIIGGLVDPSRRAQVADLVELVMAPLREQVSPEVLNELHITANLYPPDDFKEMEKWKASGLNSTEFDLEVTHPDYFKAICPGKSATYPLEYWLEAQEASVKIFGPGRGTTSFILMGLEPMNIMLEGVEERMSKGVYPNMLVYQPVPGADMFRMPPPNADWLVEASEKVADLYIKYQDRFDMPLAKDHRPGYTRMGRSQYIILAGDMLAYKLQEQGYELPEAYPVC</sequence>
<reference key="1">
    <citation type="journal article" date="2013" name="PLoS ONE">
        <title>Specific gene bciD for C7-methyl oxidation in bacteriochlorophyll e biosynthesis of brown-colored green sulfur bacteria.</title>
        <authorList>
            <person name="Harada J."/>
            <person name="Mizoguchi T."/>
            <person name="Satoh S."/>
            <person name="Tsukatani Y."/>
            <person name="Yokono M."/>
            <person name="Noguchi M."/>
            <person name="Tanaka A."/>
            <person name="Tamiaki H."/>
        </authorList>
    </citation>
    <scope>NUCLEOTIDE SEQUENCE [GENOMIC DNA]</scope>
    <scope>FUNCTION</scope>
    <scope>DISRUPTION PHENOTYPE</scope>
    <scope>PATHWAY</scope>
    <source>
        <strain evidence="10">RK-j-1</strain>
    </source>
</reference>
<reference key="2">
    <citation type="submission" date="2016-09" db="EMBL/GenBank/DDBJ databases">
        <title>Genome sequence of Chlorobaculum limnaeum.</title>
        <authorList>
            <person name="Liu Z."/>
            <person name="Tank M."/>
            <person name="Bryant D.A."/>
        </authorList>
    </citation>
    <scope>NUCLEOTIDE SEQUENCE [LARGE SCALE GENOMIC DNA]</scope>
    <source>
        <strain evidence="9 11">DSM 1677 / 4930</strain>
    </source>
</reference>
<reference key="3">
    <citation type="journal article" date="2014" name="Photosyn. Res.">
        <title>Isolation and characterization of a new bacteriochlorophyll-c bearing a neopentyl substituent at the 8-position from the bciD-deletion mutant of the brown-colored green sulfur bacterium Chlorobaculum limnaeum.</title>
        <authorList>
            <person name="Mizoguchi T."/>
            <person name="Harada J."/>
            <person name="Tsukatani Y."/>
            <person name="Tamiaki H."/>
        </authorList>
    </citation>
    <scope>DISRUPTION PHENOTYPE</scope>
    <source>
        <strain>RK-j-1</strain>
    </source>
</reference>
<reference key="4">
    <citation type="journal article" date="2017" name="J. Biol. Chem.">
        <title>BciD is a radical S-adenosyl-L-methionine (SAM) enzyme that completes bacteriochlorophyllide e biosynthesis by oxidizing a methyl group into a formyl group at C-7.</title>
        <authorList>
            <person name="Thweatt J.L."/>
            <person name="Ferlez B.H."/>
            <person name="Golbeck J.H."/>
            <person name="Bryant D.A."/>
        </authorList>
    </citation>
    <scope>FUNCTION</scope>
    <scope>CATALYTIC ACTIVITY</scope>
    <scope>COFACTOR</scope>
    <scope>DISRUPTION PHENOTYPE</scope>
    <scope>SUBSTRATE SPECIFICITY</scope>
    <source>
        <strain>DSM 1677 / 4930</strain>
    </source>
</reference>
<comment type="function">
    <text evidence="2 4">Involved in the biosynthesis of bacteriochlorophyll e (BChl e). Catalyzes two consecutive hydroxylation reactions of the C-7 methyl group of bacteriochlorophyllide c (BChlide c) to form a geminal diol intermediate that spontaneously dehydrates to produce the formyl group of bacteriochlorophyllide e (BChlide e) (PubMed:23560066, PubMed:27994052). Also able to catalyze the same reaction for bacteriochlorophyllide d (BChlide d) to give rise to bacteriochlorophyllide f (BChlide f) (PubMed:27994052).</text>
</comment>
<comment type="catalytic activity">
    <reaction evidence="4">
        <text>a bacteriochlorophyllide c + 2 S-adenosyl-L-methionine + H2O = a bacteriochlorophyllide e + 2 5'-deoxyadenosine + 2 L-methionine + 2 H(+)</text>
        <dbReference type="Rhea" id="RHEA:52252"/>
        <dbReference type="ChEBI" id="CHEBI:15377"/>
        <dbReference type="ChEBI" id="CHEBI:15378"/>
        <dbReference type="ChEBI" id="CHEBI:17319"/>
        <dbReference type="ChEBI" id="CHEBI:57844"/>
        <dbReference type="ChEBI" id="CHEBI:59789"/>
        <dbReference type="ChEBI" id="CHEBI:90965"/>
        <dbReference type="ChEBI" id="CHEBI:136512"/>
        <dbReference type="EC" id="1.17.98.2"/>
    </reaction>
</comment>
<comment type="catalytic activity">
    <reaction evidence="4">
        <text>a bacteriochlorophyllide d + 2 S-adenosyl-L-methionine + H2O = a bacteriochlorophyllide f + 2 5'-deoxyadenosine + 2 L-methionine + 2 H(+)</text>
        <dbReference type="Rhea" id="RHEA:55812"/>
        <dbReference type="ChEBI" id="CHEBI:15377"/>
        <dbReference type="ChEBI" id="CHEBI:15378"/>
        <dbReference type="ChEBI" id="CHEBI:17319"/>
        <dbReference type="ChEBI" id="CHEBI:57844"/>
        <dbReference type="ChEBI" id="CHEBI:59789"/>
        <dbReference type="ChEBI" id="CHEBI:90955"/>
        <dbReference type="ChEBI" id="CHEBI:139237"/>
        <dbReference type="EC" id="1.17.98.2"/>
    </reaction>
</comment>
<comment type="cofactor">
    <cofactor evidence="4">
        <name>[4Fe-4S] cluster</name>
        <dbReference type="ChEBI" id="CHEBI:49883"/>
    </cofactor>
    <text evidence="4">Binds 1 [4Fe-4S] cluster.</text>
</comment>
<comment type="pathway">
    <text evidence="8">Porphyrin-containing compound metabolism; bacteriochlorophyll biosynthesis.</text>
</comment>
<comment type="disruption phenotype">
    <text evidence="2 3 4">Cells lacking this gene are unable to produce bacteriochlorophyll e (BChl e), accumulate bacteriochlorophyll c (BChl c) and are green in color instead of the characteristic brownish color (PubMed:23560066, PubMed:27994052). The mutant also has a novel homolog containing a triple 8-methylated neopentyl substituent at the 8-position (PubMed:24496988).</text>
</comment>
<comment type="similarity">
    <text evidence="7">Belongs to the radical SAM superfamily.</text>
</comment>
<organism>
    <name type="scientific">Chlorobaculum limnaeum</name>
    <dbReference type="NCBI Taxonomy" id="274537"/>
    <lineage>
        <taxon>Bacteria</taxon>
        <taxon>Pseudomonadati</taxon>
        <taxon>Chlorobiota</taxon>
        <taxon>Chlorobiia</taxon>
        <taxon>Chlorobiales</taxon>
        <taxon>Chlorobiaceae</taxon>
        <taxon>Chlorobaculum</taxon>
    </lineage>
</organism>
<gene>
    <name evidence="5" type="primary">bciD</name>
    <name evidence="9" type="ORF">BIU88_11010</name>
</gene>